<sequence length="891" mass="97999">MSSKDISSKSPSGNDALNDKKGTKTSETNDRNSTNNTKERDELEDLSEEDLQLKNDLELLVQAVQDATPELVGSSLTQLKEIIRTSTSSMTAVPKPLKFLRPHYFTLVKIYDSWPQSPQKTQLADILSVLGMSYSNTSKHESLKYRLQGVTTDPSLWGHEYVRHLASEIEEEFASRQEEEAPTDDLMELALTIVPFFLTHNAEADAIDLLQELGAIEKVVPFVELDNASRVCLYITSCVNLLPFPEDVAMLRTAHAIYRKFDQLTQALNVAIRLDDMSLIKEDCEAATDPLLKKQMSYMLARQQIPMDMGDEELNDALNNTHLSDHFHYLGKELNLMDPKVPEDIFKTHLEVARTGLGASGVYSAKQNLANTFVNALVNAGYSNDRLILVDDEKTSWIYKNKESGLISATASIGLLQLWNVDMGLSLLDKYLYSSEENTKAGALLGIGVTNVAVRNEADPAMAILSEYLETGSVKLRASAILGLGLAYSGANREDLLDMLSPIVTDTDCPMQLSCLAALSLGLIFVGTCNGDVASTILQTLMEREESAQNDQWGRFMALGLALLFNGKQDLADATVETLKAIEGKIARQAEILVDICSYAGTGNVLHIQKLLHICSEPPSDDAKESETTIQTFAALGVATIAMGEDIGAEMVLRHFDHMMHYGEPSIRKAIPLALGLLSASNPQMRIFDTLSRYSHDNDLDVAYNAIFAMGLVGAGTSNARLAQLLRQLASYYHKESNALFMVRIAQGLLYLGKGTMTLNPYHTERQILGQTAFAGLMTVVLAMLDANTFVLDTSHWLLYAITLAIRPRMLITLGEDGQYLPVSVRVGQAVDVVGQAGRPKVITGWVTHTTPVLLHHNERAELATEAYTPLTSLEGIVILKKNTEDIEMTA</sequence>
<organism>
    <name type="scientific">Schizosaccharomyces pombe (strain 972 / ATCC 24843)</name>
    <name type="common">Fission yeast</name>
    <dbReference type="NCBI Taxonomy" id="284812"/>
    <lineage>
        <taxon>Eukaryota</taxon>
        <taxon>Fungi</taxon>
        <taxon>Dikarya</taxon>
        <taxon>Ascomycota</taxon>
        <taxon>Taphrinomycotina</taxon>
        <taxon>Schizosaccharomycetes</taxon>
        <taxon>Schizosaccharomycetales</taxon>
        <taxon>Schizosaccharomycetaceae</taxon>
        <taxon>Schizosaccharomyces</taxon>
    </lineage>
</organism>
<protein>
    <recommendedName>
        <fullName>26S proteasome regulatory subunit rpn1</fullName>
    </recommendedName>
    <alternativeName>
        <fullName>19S regulatory cap region of 26S protease subunit 2</fullName>
    </alternativeName>
    <alternativeName>
        <fullName>Proteasome non-ATPase subunit mts4</fullName>
    </alternativeName>
</protein>
<proteinExistence type="evidence at protein level"/>
<name>RPN1_SCHPO</name>
<evidence type="ECO:0000256" key="1">
    <source>
        <dbReference type="SAM" id="MobiDB-lite"/>
    </source>
</evidence>
<evidence type="ECO:0000269" key="2">
    <source>
    </source>
</evidence>
<evidence type="ECO:0000269" key="3">
    <source>
    </source>
</evidence>
<evidence type="ECO:0000305" key="4"/>
<dbReference type="EMBL" id="Y09819">
    <property type="protein sequence ID" value="CAA70948.1"/>
    <property type="molecule type" value="mRNA"/>
</dbReference>
<dbReference type="EMBL" id="CU329671">
    <property type="protein sequence ID" value="CAC19753.1"/>
    <property type="molecule type" value="Genomic_DNA"/>
</dbReference>
<dbReference type="PIR" id="T52488">
    <property type="entry name" value="T52488"/>
</dbReference>
<dbReference type="RefSeq" id="NP_596171.1">
    <property type="nucleotide sequence ID" value="NM_001022091.2"/>
</dbReference>
<dbReference type="SMR" id="P87048"/>
<dbReference type="BioGRID" id="277782">
    <property type="interactions" value="62"/>
</dbReference>
<dbReference type="ComplexPortal" id="CPX-9077">
    <property type="entry name" value="26S proteasome complex"/>
</dbReference>
<dbReference type="FunCoup" id="P87048">
    <property type="interactions" value="979"/>
</dbReference>
<dbReference type="IntAct" id="P87048">
    <property type="interactions" value="3"/>
</dbReference>
<dbReference type="STRING" id="284812.P87048"/>
<dbReference type="iPTMnet" id="P87048"/>
<dbReference type="PaxDb" id="4896-SPBP19A11.03c.1"/>
<dbReference type="EnsemblFungi" id="SPBP19A11.03c.1">
    <property type="protein sequence ID" value="SPBP19A11.03c.1:pep"/>
    <property type="gene ID" value="SPBP19A11.03c"/>
</dbReference>
<dbReference type="GeneID" id="2541268"/>
<dbReference type="KEGG" id="spo:2541268"/>
<dbReference type="PomBase" id="SPBP19A11.03c"/>
<dbReference type="VEuPathDB" id="FungiDB:SPBP19A11.03c"/>
<dbReference type="eggNOG" id="KOG2005">
    <property type="taxonomic scope" value="Eukaryota"/>
</dbReference>
<dbReference type="HOGENOM" id="CLU_008705_1_0_1"/>
<dbReference type="InParanoid" id="P87048"/>
<dbReference type="OMA" id="GTCNGDI"/>
<dbReference type="PhylomeDB" id="P87048"/>
<dbReference type="Reactome" id="R-SPO-1236978">
    <property type="pathway name" value="Cross-presentation of soluble exogenous antigens (endosomes)"/>
</dbReference>
<dbReference type="Reactome" id="R-SPO-350562">
    <property type="pathway name" value="Regulation of ornithine decarboxylase (ODC)"/>
</dbReference>
<dbReference type="Reactome" id="R-SPO-5687128">
    <property type="pathway name" value="MAPK6/MAPK4 signaling"/>
</dbReference>
<dbReference type="Reactome" id="R-SPO-5689603">
    <property type="pathway name" value="UCH proteinases"/>
</dbReference>
<dbReference type="Reactome" id="R-SPO-5689880">
    <property type="pathway name" value="Ub-specific processing proteases"/>
</dbReference>
<dbReference type="Reactome" id="R-SPO-6798695">
    <property type="pathway name" value="Neutrophil degranulation"/>
</dbReference>
<dbReference type="Reactome" id="R-SPO-68949">
    <property type="pathway name" value="Orc1 removal from chromatin"/>
</dbReference>
<dbReference type="Reactome" id="R-SPO-69017">
    <property type="pathway name" value="CDK-mediated phosphorylation and removal of Cdc6"/>
</dbReference>
<dbReference type="Reactome" id="R-SPO-69601">
    <property type="pathway name" value="Ubiquitin Mediated Degradation of Phosphorylated Cdc25A"/>
</dbReference>
<dbReference type="Reactome" id="R-SPO-75815">
    <property type="pathway name" value="Ubiquitin-dependent degradation of Cyclin D"/>
</dbReference>
<dbReference type="Reactome" id="R-SPO-8854050">
    <property type="pathway name" value="FBXL7 down-regulates AURKA during mitotic entry and in early mitosis"/>
</dbReference>
<dbReference type="Reactome" id="R-SPO-8948751">
    <property type="pathway name" value="Regulation of PTEN stability and activity"/>
</dbReference>
<dbReference type="Reactome" id="R-SPO-8951664">
    <property type="pathway name" value="Neddylation"/>
</dbReference>
<dbReference type="Reactome" id="R-SPO-9755511">
    <property type="pathway name" value="KEAP1-NFE2L2 pathway"/>
</dbReference>
<dbReference type="Reactome" id="R-SPO-983168">
    <property type="pathway name" value="Antigen processing: Ubiquitination &amp; Proteasome degradation"/>
</dbReference>
<dbReference type="Reactome" id="R-SPO-9907900">
    <property type="pathway name" value="Proteasome assembly"/>
</dbReference>
<dbReference type="PRO" id="PR:P87048"/>
<dbReference type="Proteomes" id="UP000002485">
    <property type="component" value="Chromosome II"/>
</dbReference>
<dbReference type="GO" id="GO:1905754">
    <property type="term" value="C:ascospore-type prospore nucleus"/>
    <property type="evidence" value="ECO:0000314"/>
    <property type="project" value="PomBase"/>
</dbReference>
<dbReference type="GO" id="GO:0005829">
    <property type="term" value="C:cytosol"/>
    <property type="evidence" value="ECO:0007005"/>
    <property type="project" value="PomBase"/>
</dbReference>
<dbReference type="GO" id="GO:0034399">
    <property type="term" value="C:nuclear periphery"/>
    <property type="evidence" value="ECO:0000314"/>
    <property type="project" value="PomBase"/>
</dbReference>
<dbReference type="GO" id="GO:0005634">
    <property type="term" value="C:nucleus"/>
    <property type="evidence" value="ECO:0007005"/>
    <property type="project" value="PomBase"/>
</dbReference>
<dbReference type="GO" id="GO:0000502">
    <property type="term" value="C:proteasome complex"/>
    <property type="evidence" value="ECO:0000353"/>
    <property type="project" value="PomBase"/>
</dbReference>
<dbReference type="GO" id="GO:0005838">
    <property type="term" value="C:proteasome regulatory particle"/>
    <property type="evidence" value="ECO:0000314"/>
    <property type="project" value="PomBase"/>
</dbReference>
<dbReference type="GO" id="GO:0008540">
    <property type="term" value="C:proteasome regulatory particle, base subcomplex"/>
    <property type="evidence" value="ECO:0000314"/>
    <property type="project" value="PomBase"/>
</dbReference>
<dbReference type="GO" id="GO:0034515">
    <property type="term" value="C:proteasome storage granule"/>
    <property type="evidence" value="ECO:0000318"/>
    <property type="project" value="GO_Central"/>
</dbReference>
<dbReference type="GO" id="GO:0030234">
    <property type="term" value="F:enzyme regulator activity"/>
    <property type="evidence" value="ECO:0007669"/>
    <property type="project" value="InterPro"/>
</dbReference>
<dbReference type="GO" id="GO:0010498">
    <property type="term" value="P:proteasomal protein catabolic process"/>
    <property type="evidence" value="ECO:0000269"/>
    <property type="project" value="PomBase"/>
</dbReference>
<dbReference type="GO" id="GO:0043161">
    <property type="term" value="P:proteasome-mediated ubiquitin-dependent protein catabolic process"/>
    <property type="evidence" value="ECO:0000353"/>
    <property type="project" value="PomBase"/>
</dbReference>
<dbReference type="GO" id="GO:0042176">
    <property type="term" value="P:regulation of protein catabolic process"/>
    <property type="evidence" value="ECO:0007669"/>
    <property type="project" value="InterPro"/>
</dbReference>
<dbReference type="FunFam" id="1.25.10.10:FF:000026">
    <property type="entry name" value="26S proteasome non-ATPase regulatory subunit 2"/>
    <property type="match status" value="1"/>
</dbReference>
<dbReference type="Gene3D" id="1.25.10.10">
    <property type="entry name" value="Leucine-rich Repeat Variant"/>
    <property type="match status" value="1"/>
</dbReference>
<dbReference type="InterPro" id="IPR016643">
    <property type="entry name" value="26S_Psome_Rpn1"/>
</dbReference>
<dbReference type="InterPro" id="IPR011989">
    <property type="entry name" value="ARM-like"/>
</dbReference>
<dbReference type="InterPro" id="IPR016024">
    <property type="entry name" value="ARM-type_fold"/>
</dbReference>
<dbReference type="InterPro" id="IPR002015">
    <property type="entry name" value="Proteasome/cyclosome_rpt"/>
</dbReference>
<dbReference type="InterPro" id="IPR041433">
    <property type="entry name" value="RPN1_C"/>
</dbReference>
<dbReference type="InterPro" id="IPR040892">
    <property type="entry name" value="RPN1_N"/>
</dbReference>
<dbReference type="PANTHER" id="PTHR10943">
    <property type="entry name" value="26S PROTEASOME NON-ATPASE REGULATORY SUBUNIT"/>
    <property type="match status" value="1"/>
</dbReference>
<dbReference type="PANTHER" id="PTHR10943:SF1">
    <property type="entry name" value="26S PROTEASOME NON-ATPASE REGULATORY SUBUNIT 2"/>
    <property type="match status" value="1"/>
</dbReference>
<dbReference type="Pfam" id="PF01851">
    <property type="entry name" value="PC_rep"/>
    <property type="match status" value="2"/>
</dbReference>
<dbReference type="Pfam" id="PF18051">
    <property type="entry name" value="RPN1_C"/>
    <property type="match status" value="1"/>
</dbReference>
<dbReference type="Pfam" id="PF17781">
    <property type="entry name" value="RPN1_RPN2_N"/>
    <property type="match status" value="1"/>
</dbReference>
<dbReference type="PIRSF" id="PIRSF015965">
    <property type="entry name" value="26S_Psome_Rpn1"/>
    <property type="match status" value="1"/>
</dbReference>
<dbReference type="SUPFAM" id="SSF48371">
    <property type="entry name" value="ARM repeat"/>
    <property type="match status" value="1"/>
</dbReference>
<accession>P87048</accession>
<accession>Q9HDV7</accession>
<keyword id="KW-0597">Phosphoprotein</keyword>
<keyword id="KW-0647">Proteasome</keyword>
<keyword id="KW-1185">Reference proteome</keyword>
<keyword id="KW-0677">Repeat</keyword>
<reference key="1">
    <citation type="journal article" date="1997" name="J. Biol. Chem.">
        <title>Mts4, a non-ATPase subunit of the 26 S protease in fission yeast is essential for mitosis and interacts directly with the ATPase subunit Mts2.</title>
        <authorList>
            <person name="Wilkinson C.R."/>
            <person name="Wallace M."/>
            <person name="Seeger M."/>
            <person name="Dubiel W."/>
            <person name="Gordon C.B."/>
        </authorList>
    </citation>
    <scope>NUCLEOTIDE SEQUENCE [MRNA]</scope>
</reference>
<reference key="2">
    <citation type="journal article" date="2002" name="Nature">
        <title>The genome sequence of Schizosaccharomyces pombe.</title>
        <authorList>
            <person name="Wood V."/>
            <person name="Gwilliam R."/>
            <person name="Rajandream M.A."/>
            <person name="Lyne M.H."/>
            <person name="Lyne R."/>
            <person name="Stewart A."/>
            <person name="Sgouros J.G."/>
            <person name="Peat N."/>
            <person name="Hayles J."/>
            <person name="Baker S.G."/>
            <person name="Basham D."/>
            <person name="Bowman S."/>
            <person name="Brooks K."/>
            <person name="Brown D."/>
            <person name="Brown S."/>
            <person name="Chillingworth T."/>
            <person name="Churcher C.M."/>
            <person name="Collins M."/>
            <person name="Connor R."/>
            <person name="Cronin A."/>
            <person name="Davis P."/>
            <person name="Feltwell T."/>
            <person name="Fraser A."/>
            <person name="Gentles S."/>
            <person name="Goble A."/>
            <person name="Hamlin N."/>
            <person name="Harris D.E."/>
            <person name="Hidalgo J."/>
            <person name="Hodgson G."/>
            <person name="Holroyd S."/>
            <person name="Hornsby T."/>
            <person name="Howarth S."/>
            <person name="Huckle E.J."/>
            <person name="Hunt S."/>
            <person name="Jagels K."/>
            <person name="James K.D."/>
            <person name="Jones L."/>
            <person name="Jones M."/>
            <person name="Leather S."/>
            <person name="McDonald S."/>
            <person name="McLean J."/>
            <person name="Mooney P."/>
            <person name="Moule S."/>
            <person name="Mungall K.L."/>
            <person name="Murphy L.D."/>
            <person name="Niblett D."/>
            <person name="Odell C."/>
            <person name="Oliver K."/>
            <person name="O'Neil S."/>
            <person name="Pearson D."/>
            <person name="Quail M.A."/>
            <person name="Rabbinowitsch E."/>
            <person name="Rutherford K.M."/>
            <person name="Rutter S."/>
            <person name="Saunders D."/>
            <person name="Seeger K."/>
            <person name="Sharp S."/>
            <person name="Skelton J."/>
            <person name="Simmonds M.N."/>
            <person name="Squares R."/>
            <person name="Squares S."/>
            <person name="Stevens K."/>
            <person name="Taylor K."/>
            <person name="Taylor R.G."/>
            <person name="Tivey A."/>
            <person name="Walsh S.V."/>
            <person name="Warren T."/>
            <person name="Whitehead S."/>
            <person name="Woodward J.R."/>
            <person name="Volckaert G."/>
            <person name="Aert R."/>
            <person name="Robben J."/>
            <person name="Grymonprez B."/>
            <person name="Weltjens I."/>
            <person name="Vanstreels E."/>
            <person name="Rieger M."/>
            <person name="Schaefer M."/>
            <person name="Mueller-Auer S."/>
            <person name="Gabel C."/>
            <person name="Fuchs M."/>
            <person name="Duesterhoeft A."/>
            <person name="Fritzc C."/>
            <person name="Holzer E."/>
            <person name="Moestl D."/>
            <person name="Hilbert H."/>
            <person name="Borzym K."/>
            <person name="Langer I."/>
            <person name="Beck A."/>
            <person name="Lehrach H."/>
            <person name="Reinhardt R."/>
            <person name="Pohl T.M."/>
            <person name="Eger P."/>
            <person name="Zimmermann W."/>
            <person name="Wedler H."/>
            <person name="Wambutt R."/>
            <person name="Purnelle B."/>
            <person name="Goffeau A."/>
            <person name="Cadieu E."/>
            <person name="Dreano S."/>
            <person name="Gloux S."/>
            <person name="Lelaure V."/>
            <person name="Mottier S."/>
            <person name="Galibert F."/>
            <person name="Aves S.J."/>
            <person name="Xiang Z."/>
            <person name="Hunt C."/>
            <person name="Moore K."/>
            <person name="Hurst S.M."/>
            <person name="Lucas M."/>
            <person name="Rochet M."/>
            <person name="Gaillardin C."/>
            <person name="Tallada V.A."/>
            <person name="Garzon A."/>
            <person name="Thode G."/>
            <person name="Daga R.R."/>
            <person name="Cruzado L."/>
            <person name="Jimenez J."/>
            <person name="Sanchez M."/>
            <person name="del Rey F."/>
            <person name="Benito J."/>
            <person name="Dominguez A."/>
            <person name="Revuelta J.L."/>
            <person name="Moreno S."/>
            <person name="Armstrong J."/>
            <person name="Forsburg S.L."/>
            <person name="Cerutti L."/>
            <person name="Lowe T."/>
            <person name="McCombie W.R."/>
            <person name="Paulsen I."/>
            <person name="Potashkin J."/>
            <person name="Shpakovski G.V."/>
            <person name="Ussery D."/>
            <person name="Barrell B.G."/>
            <person name="Nurse P."/>
        </authorList>
    </citation>
    <scope>NUCLEOTIDE SEQUENCE [LARGE SCALE GENOMIC DNA]</scope>
    <source>
        <strain>972 / ATCC 24843</strain>
    </source>
</reference>
<reference key="3">
    <citation type="journal article" date="2004" name="J. Mol. Biol.">
        <title>Uch2/Uch37 is the major deubiquitinating enzyme associated with the 26S proteasome in fission yeast.</title>
        <authorList>
            <person name="Stone M."/>
            <person name="Hartmann-Petersen R."/>
            <person name="Seeger M."/>
            <person name="Bech-Otschir D."/>
            <person name="Wallace M."/>
            <person name="Gordon C."/>
        </authorList>
    </citation>
    <scope>INTERACTION WITH UBP6</scope>
</reference>
<reference key="4">
    <citation type="journal article" date="2008" name="J. Proteome Res.">
        <title>Phosphoproteome analysis of fission yeast.</title>
        <authorList>
            <person name="Wilson-Grady J.T."/>
            <person name="Villen J."/>
            <person name="Gygi S.P."/>
        </authorList>
    </citation>
    <scope>PHOSPHORYLATION [LARGE SCALE ANALYSIS] AT SER-10</scope>
    <scope>IDENTIFICATION BY MASS SPECTROMETRY</scope>
</reference>
<comment type="function">
    <text>Acts as a regulatory subunit of the 26 proteasome which is involved in the ATP-dependent degradation of ubiquitinated proteins.</text>
</comment>
<comment type="subunit">
    <text evidence="2">Component of the 26S proteasome. Interacts with ubp6.</text>
</comment>
<comment type="interaction">
    <interactant intactId="EBI-1152810">
        <id>P87048</id>
    </interactant>
    <interactant intactId="EBI-1152591">
        <id>P38937</id>
        <label>cut8</label>
    </interactant>
    <organismsDiffer>false</organismsDiffer>
    <experiments>4</experiments>
</comment>
<comment type="similarity">
    <text evidence="4">Belongs to the proteasome subunit S2 family.</text>
</comment>
<gene>
    <name type="primary">rpn1</name>
    <name type="synonym">mts4</name>
    <name type="ORF">SPBP19A11.03c</name>
</gene>
<feature type="chain" id="PRO_0000173814" description="26S proteasome regulatory subunit rpn1">
    <location>
        <begin position="1"/>
        <end position="891"/>
    </location>
</feature>
<feature type="repeat" description="PC 1">
    <location>
        <begin position="408"/>
        <end position="441"/>
    </location>
</feature>
<feature type="repeat" description="PC 2">
    <location>
        <begin position="442"/>
        <end position="478"/>
    </location>
</feature>
<feature type="repeat" description="PC 3">
    <location>
        <begin position="479"/>
        <end position="513"/>
    </location>
</feature>
<feature type="repeat" description="PC 4">
    <location>
        <begin position="517"/>
        <end position="550"/>
    </location>
</feature>
<feature type="repeat" description="PC 5">
    <location>
        <begin position="673"/>
        <end position="704"/>
    </location>
</feature>
<feature type="repeat" description="PC 6">
    <location>
        <begin position="705"/>
        <end position="739"/>
    </location>
</feature>
<feature type="region of interest" description="Disordered" evidence="1">
    <location>
        <begin position="1"/>
        <end position="48"/>
    </location>
</feature>
<feature type="compositionally biased region" description="Low complexity" evidence="1">
    <location>
        <begin position="1"/>
        <end position="12"/>
    </location>
</feature>
<feature type="compositionally biased region" description="Basic and acidic residues" evidence="1">
    <location>
        <begin position="17"/>
        <end position="30"/>
    </location>
</feature>
<feature type="modified residue" description="Phosphoserine" evidence="3">
    <location>
        <position position="10"/>
    </location>
</feature>
<feature type="sequence conflict" description="In Ref. 1; CAA70948." evidence="4" ref="1">
    <original>V</original>
    <variation>E</variation>
    <location>
        <position position="72"/>
    </location>
</feature>
<feature type="sequence conflict" description="In Ref. 1; CAA70948." evidence="4" ref="1">
    <original>PLTSLEGIVILKKNTEDIEMTA</original>
    <variation>TFDFVGRYCYFKKKYGGH</variation>
    <location>
        <begin position="870"/>
        <end position="891"/>
    </location>
</feature>